<reference key="1">
    <citation type="journal article" date="1999" name="Genomics">
        <title>Identification of candidate Drosophila olfactory receptors from genomic DNA sequence.</title>
        <authorList>
            <person name="Gao Q."/>
            <person name="Chess A."/>
        </authorList>
    </citation>
    <scope>NUCLEOTIDE SEQUENCE [GENOMIC DNA]</scope>
    <scope>TISSUE SPECIFICITY</scope>
</reference>
<reference key="2">
    <citation type="journal article" date="2000" name="Science">
        <title>The genome sequence of Drosophila melanogaster.</title>
        <authorList>
            <person name="Adams M.D."/>
            <person name="Celniker S.E."/>
            <person name="Holt R.A."/>
            <person name="Evans C.A."/>
            <person name="Gocayne J.D."/>
            <person name="Amanatides P.G."/>
            <person name="Scherer S.E."/>
            <person name="Li P.W."/>
            <person name="Hoskins R.A."/>
            <person name="Galle R.F."/>
            <person name="George R.A."/>
            <person name="Lewis S.E."/>
            <person name="Richards S."/>
            <person name="Ashburner M."/>
            <person name="Henderson S.N."/>
            <person name="Sutton G.G."/>
            <person name="Wortman J.R."/>
            <person name="Yandell M.D."/>
            <person name="Zhang Q."/>
            <person name="Chen L.X."/>
            <person name="Brandon R.C."/>
            <person name="Rogers Y.-H.C."/>
            <person name="Blazej R.G."/>
            <person name="Champe M."/>
            <person name="Pfeiffer B.D."/>
            <person name="Wan K.H."/>
            <person name="Doyle C."/>
            <person name="Baxter E.G."/>
            <person name="Helt G."/>
            <person name="Nelson C.R."/>
            <person name="Miklos G.L.G."/>
            <person name="Abril J.F."/>
            <person name="Agbayani A."/>
            <person name="An H.-J."/>
            <person name="Andrews-Pfannkoch C."/>
            <person name="Baldwin D."/>
            <person name="Ballew R.M."/>
            <person name="Basu A."/>
            <person name="Baxendale J."/>
            <person name="Bayraktaroglu L."/>
            <person name="Beasley E.M."/>
            <person name="Beeson K.Y."/>
            <person name="Benos P.V."/>
            <person name="Berman B.P."/>
            <person name="Bhandari D."/>
            <person name="Bolshakov S."/>
            <person name="Borkova D."/>
            <person name="Botchan M.R."/>
            <person name="Bouck J."/>
            <person name="Brokstein P."/>
            <person name="Brottier P."/>
            <person name="Burtis K.C."/>
            <person name="Busam D.A."/>
            <person name="Butler H."/>
            <person name="Cadieu E."/>
            <person name="Center A."/>
            <person name="Chandra I."/>
            <person name="Cherry J.M."/>
            <person name="Cawley S."/>
            <person name="Dahlke C."/>
            <person name="Davenport L.B."/>
            <person name="Davies P."/>
            <person name="de Pablos B."/>
            <person name="Delcher A."/>
            <person name="Deng Z."/>
            <person name="Mays A.D."/>
            <person name="Dew I."/>
            <person name="Dietz S.M."/>
            <person name="Dodson K."/>
            <person name="Doup L.E."/>
            <person name="Downes M."/>
            <person name="Dugan-Rocha S."/>
            <person name="Dunkov B.C."/>
            <person name="Dunn P."/>
            <person name="Durbin K.J."/>
            <person name="Evangelista C.C."/>
            <person name="Ferraz C."/>
            <person name="Ferriera S."/>
            <person name="Fleischmann W."/>
            <person name="Fosler C."/>
            <person name="Gabrielian A.E."/>
            <person name="Garg N.S."/>
            <person name="Gelbart W.M."/>
            <person name="Glasser K."/>
            <person name="Glodek A."/>
            <person name="Gong F."/>
            <person name="Gorrell J.H."/>
            <person name="Gu Z."/>
            <person name="Guan P."/>
            <person name="Harris M."/>
            <person name="Harris N.L."/>
            <person name="Harvey D.A."/>
            <person name="Heiman T.J."/>
            <person name="Hernandez J.R."/>
            <person name="Houck J."/>
            <person name="Hostin D."/>
            <person name="Houston K.A."/>
            <person name="Howland T.J."/>
            <person name="Wei M.-H."/>
            <person name="Ibegwam C."/>
            <person name="Jalali M."/>
            <person name="Kalush F."/>
            <person name="Karpen G.H."/>
            <person name="Ke Z."/>
            <person name="Kennison J.A."/>
            <person name="Ketchum K.A."/>
            <person name="Kimmel B.E."/>
            <person name="Kodira C.D."/>
            <person name="Kraft C.L."/>
            <person name="Kravitz S."/>
            <person name="Kulp D."/>
            <person name="Lai Z."/>
            <person name="Lasko P."/>
            <person name="Lei Y."/>
            <person name="Levitsky A.A."/>
            <person name="Li J.H."/>
            <person name="Li Z."/>
            <person name="Liang Y."/>
            <person name="Lin X."/>
            <person name="Liu X."/>
            <person name="Mattei B."/>
            <person name="McIntosh T.C."/>
            <person name="McLeod M.P."/>
            <person name="McPherson D."/>
            <person name="Merkulov G."/>
            <person name="Milshina N.V."/>
            <person name="Mobarry C."/>
            <person name="Morris J."/>
            <person name="Moshrefi A."/>
            <person name="Mount S.M."/>
            <person name="Moy M."/>
            <person name="Murphy B."/>
            <person name="Murphy L."/>
            <person name="Muzny D.M."/>
            <person name="Nelson D.L."/>
            <person name="Nelson D.R."/>
            <person name="Nelson K.A."/>
            <person name="Nixon K."/>
            <person name="Nusskern D.R."/>
            <person name="Pacleb J.M."/>
            <person name="Palazzolo M."/>
            <person name="Pittman G.S."/>
            <person name="Pan S."/>
            <person name="Pollard J."/>
            <person name="Puri V."/>
            <person name="Reese M.G."/>
            <person name="Reinert K."/>
            <person name="Remington K."/>
            <person name="Saunders R.D.C."/>
            <person name="Scheeler F."/>
            <person name="Shen H."/>
            <person name="Shue B.C."/>
            <person name="Siden-Kiamos I."/>
            <person name="Simpson M."/>
            <person name="Skupski M.P."/>
            <person name="Smith T.J."/>
            <person name="Spier E."/>
            <person name="Spradling A.C."/>
            <person name="Stapleton M."/>
            <person name="Strong R."/>
            <person name="Sun E."/>
            <person name="Svirskas R."/>
            <person name="Tector C."/>
            <person name="Turner R."/>
            <person name="Venter E."/>
            <person name="Wang A.H."/>
            <person name="Wang X."/>
            <person name="Wang Z.-Y."/>
            <person name="Wassarman D.A."/>
            <person name="Weinstock G.M."/>
            <person name="Weissenbach J."/>
            <person name="Williams S.M."/>
            <person name="Woodage T."/>
            <person name="Worley K.C."/>
            <person name="Wu D."/>
            <person name="Yang S."/>
            <person name="Yao Q.A."/>
            <person name="Ye J."/>
            <person name="Yeh R.-F."/>
            <person name="Zaveri J.S."/>
            <person name="Zhan M."/>
            <person name="Zhang G."/>
            <person name="Zhao Q."/>
            <person name="Zheng L."/>
            <person name="Zheng X.H."/>
            <person name="Zhong F.N."/>
            <person name="Zhong W."/>
            <person name="Zhou X."/>
            <person name="Zhu S.C."/>
            <person name="Zhu X."/>
            <person name="Smith H.O."/>
            <person name="Gibbs R.A."/>
            <person name="Myers E.W."/>
            <person name="Rubin G.M."/>
            <person name="Venter J.C."/>
        </authorList>
    </citation>
    <scope>NUCLEOTIDE SEQUENCE [LARGE SCALE GENOMIC DNA]</scope>
    <source>
        <strain>Berkeley</strain>
    </source>
</reference>
<reference key="3">
    <citation type="journal article" date="2002" name="Genome Biol.">
        <title>Annotation of the Drosophila melanogaster euchromatic genome: a systematic review.</title>
        <authorList>
            <person name="Misra S."/>
            <person name="Crosby M.A."/>
            <person name="Mungall C.J."/>
            <person name="Matthews B.B."/>
            <person name="Campbell K.S."/>
            <person name="Hradecky P."/>
            <person name="Huang Y."/>
            <person name="Kaminker J.S."/>
            <person name="Millburn G.H."/>
            <person name="Prochnik S.E."/>
            <person name="Smith C.D."/>
            <person name="Tupy J.L."/>
            <person name="Whitfield E.J."/>
            <person name="Bayraktaroglu L."/>
            <person name="Berman B.P."/>
            <person name="Bettencourt B.R."/>
            <person name="Celniker S.E."/>
            <person name="de Grey A.D.N.J."/>
            <person name="Drysdale R.A."/>
            <person name="Harris N.L."/>
            <person name="Richter J."/>
            <person name="Russo S."/>
            <person name="Schroeder A.J."/>
            <person name="Shu S.Q."/>
            <person name="Stapleton M."/>
            <person name="Yamada C."/>
            <person name="Ashburner M."/>
            <person name="Gelbart W.M."/>
            <person name="Rubin G.M."/>
            <person name="Lewis S.E."/>
        </authorList>
    </citation>
    <scope>GENOME REANNOTATION</scope>
    <source>
        <strain>Berkeley</strain>
    </source>
</reference>
<reference key="4">
    <citation type="journal article" date="1999" name="Neuron">
        <title>A novel family of divergent seven-transmembrane proteins: candidate odorant receptors in Drosophila.</title>
        <authorList>
            <person name="Clyne P.J."/>
            <person name="Warr C.G."/>
            <person name="Freeman M.R."/>
            <person name="Lessing D."/>
            <person name="Kim J."/>
            <person name="Carlson J.R."/>
        </authorList>
    </citation>
    <scope>IDENTIFICATION</scope>
    <scope>TISSUE SPECIFICITY</scope>
</reference>
<reference key="5">
    <citation type="journal article" date="1999" name="Cell">
        <title>A spatial map of olfactory receptor expression in the Drosophila antenna.</title>
        <authorList>
            <person name="Vosshall L.B."/>
            <person name="Amrein H."/>
            <person name="Morozov P.S."/>
            <person name="Rzhetsky A."/>
            <person name="Axel R."/>
        </authorList>
    </citation>
    <scope>IDENTIFICATION</scope>
    <source>
        <strain>Oregon-R</strain>
        <tissue>Maxillary palp</tissue>
    </source>
</reference>
<reference key="6">
    <citation type="journal article" date="2011" name="J. Neurosci.">
        <title>Similar odorants elicit different behavioral and physiological responses, some supersustained.</title>
        <authorList>
            <person name="Montague S.A."/>
            <person name="Mathew D."/>
            <person name="Carlson J.R."/>
        </authorList>
    </citation>
    <scope>FUNCTION</scope>
</reference>
<reference key="7">
    <citation type="journal article" date="2011" name="PLoS ONE">
        <title>Modeling peripheral olfactory coding in Drosophila larvae.</title>
        <authorList>
            <person name="Hoare D.J."/>
            <person name="Humble J."/>
            <person name="Jin D."/>
            <person name="Gilding N."/>
            <person name="Petersen R."/>
            <person name="Cobb M."/>
            <person name="McCrohan C."/>
        </authorList>
    </citation>
    <scope>FUNCTION</scope>
</reference>
<gene>
    <name type="primary">Or59a</name>
    <name type="synonym">AN6</name>
    <name type="synonym">dor46</name>
    <name type="synonym">DOR59D.1</name>
    <name type="synonym">Or59D.1</name>
    <name type="ORF">CG9820</name>
</gene>
<comment type="function">
    <text evidence="5 6">Odorant receptor which mediates acceptance or avoidance behavior, depending on its substrates. The odorant receptor repertoire encodes a large collection of odor stimuli that vary widely in identity, intensity, and duration. May form a complex with Orco to form odorant-sensing units, providing sensitive and prolonged odorant signaling and calcium permeability. Involved in the behavioral responses to ethyl acetate, anisole, hexanoic acid, and pyrazines.</text>
</comment>
<comment type="subunit">
    <text evidence="1">Interacts with Orco. Complexes exist early in the endomembrane system in olfactory sensory neurons (OSNs), coupling these complexes to the conserved ciliary trafficking pathway (By similarity).</text>
</comment>
<comment type="subcellular location">
    <subcellularLocation>
        <location evidence="1">Cell membrane</location>
        <topology evidence="1">Multi-pass membrane protein</topology>
    </subcellularLocation>
</comment>
<comment type="tissue specificity">
    <text evidence="3 4">Expressed in neurons of the third antennal segment.</text>
</comment>
<comment type="miscellaneous">
    <text>The atypical heteromeric and topological design of the odorant receptors appears to be an insect-specific solution for odor recognition, making the OR/Orco complex an attractive target for the development of highly selective insect repellents to disrupt olfactory-mediated host-seeking behaviors of insect disease vectors. Odor-evoked OR currents are independent of known G-protein-coupled second messenger pathways.</text>
</comment>
<comment type="similarity">
    <text evidence="7">Belongs to the insect chemoreceptor superfamily. Heteromeric odorant receptor channel (TC 1.A.69) family. Or2a subfamily.</text>
</comment>
<proteinExistence type="evidence at transcript level"/>
<sequence>MAEVRVDSLEFFKSHWTAWRYLGVAHFRVENWKNLYVFYSIVSNLLVTLCYPVHLGISLFRNRTITEDILNLTTFATCTACSVKCLLYAYNIKDVLEMERLLRLLDERVVGPEQRSIYGQVRVQLRNVLYVFIGIYMPCALFAELSFLFKEERGLMYPAWFPFDWLHSTRNYYIANAYQIVGISFQLLQNYVSDCFPAVVLCLISSHIKMLYNRFEEVGLDPARDAEKDLEACITDHKHILEWAGGSLVRVLFTFQLFSRLFRRIEAFISLPMLIQFTVTALNVCIGLAALVFFVSEPMARMYFIFYSLAMPLQIFPSCFFGTDNEYWFGRLHYAAFSCNWHTQNRSFKRKMMLFVEQSLKKSTAVAGGMMRIHLDTFFSTLKGAYSLFTIIIRMRK</sequence>
<protein>
    <recommendedName>
        <fullName>Odorant receptor 59a</fullName>
    </recommendedName>
</protein>
<organism>
    <name type="scientific">Drosophila melanogaster</name>
    <name type="common">Fruit fly</name>
    <dbReference type="NCBI Taxonomy" id="7227"/>
    <lineage>
        <taxon>Eukaryota</taxon>
        <taxon>Metazoa</taxon>
        <taxon>Ecdysozoa</taxon>
        <taxon>Arthropoda</taxon>
        <taxon>Hexapoda</taxon>
        <taxon>Insecta</taxon>
        <taxon>Pterygota</taxon>
        <taxon>Neoptera</taxon>
        <taxon>Endopterygota</taxon>
        <taxon>Diptera</taxon>
        <taxon>Brachycera</taxon>
        <taxon>Muscomorpha</taxon>
        <taxon>Ephydroidea</taxon>
        <taxon>Drosophilidae</taxon>
        <taxon>Drosophila</taxon>
        <taxon>Sophophora</taxon>
    </lineage>
</organism>
<feature type="chain" id="PRO_0000174255" description="Odorant receptor 59a">
    <location>
        <begin position="1"/>
        <end position="397"/>
    </location>
</feature>
<feature type="topological domain" description="Cytoplasmic" evidence="2">
    <location>
        <begin position="1"/>
        <end position="36"/>
    </location>
</feature>
<feature type="transmembrane region" description="Helical; Name=1" evidence="2">
    <location>
        <begin position="37"/>
        <end position="57"/>
    </location>
</feature>
<feature type="topological domain" description="Extracellular" evidence="2">
    <location>
        <begin position="58"/>
        <end position="68"/>
    </location>
</feature>
<feature type="transmembrane region" description="Helical; Name=2" evidence="2">
    <location>
        <begin position="69"/>
        <end position="92"/>
    </location>
</feature>
<feature type="topological domain" description="Cytoplasmic" evidence="2">
    <location>
        <begin position="93"/>
        <end position="128"/>
    </location>
</feature>
<feature type="transmembrane region" description="Helical; Name=3" evidence="2">
    <location>
        <begin position="129"/>
        <end position="149"/>
    </location>
</feature>
<feature type="topological domain" description="Extracellular" evidence="2">
    <location>
        <begin position="150"/>
        <end position="179"/>
    </location>
</feature>
<feature type="transmembrane region" description="Helical; Name=4" evidence="2">
    <location>
        <begin position="180"/>
        <end position="200"/>
    </location>
</feature>
<feature type="topological domain" description="Cytoplasmic" evidence="2">
    <location>
        <begin position="201"/>
        <end position="274"/>
    </location>
</feature>
<feature type="transmembrane region" description="Helical; Name=5" evidence="2">
    <location>
        <begin position="275"/>
        <end position="295"/>
    </location>
</feature>
<feature type="topological domain" description="Extracellular" evidence="2">
    <location>
        <begin position="296"/>
        <end position="301"/>
    </location>
</feature>
<feature type="transmembrane region" description="Helical; Name=6" evidence="2">
    <location>
        <begin position="302"/>
        <end position="322"/>
    </location>
</feature>
<feature type="topological domain" description="Cytoplasmic" evidence="2">
    <location>
        <begin position="323"/>
        <end position="372"/>
    </location>
</feature>
<feature type="transmembrane region" description="Helical; Name=7" evidence="2">
    <location>
        <begin position="373"/>
        <end position="393"/>
    </location>
</feature>
<feature type="topological domain" description="Extracellular" evidence="2">
    <location>
        <begin position="394"/>
        <end position="397"/>
    </location>
</feature>
<feature type="glycosylation site" description="N-linked (GlcNAc...) asparagine" evidence="2">
    <location>
        <position position="62"/>
    </location>
</feature>
<keyword id="KW-1003">Cell membrane</keyword>
<keyword id="KW-0325">Glycoprotein</keyword>
<keyword id="KW-0472">Membrane</keyword>
<keyword id="KW-0552">Olfaction</keyword>
<keyword id="KW-0675">Receptor</keyword>
<keyword id="KW-1185">Reference proteome</keyword>
<keyword id="KW-0716">Sensory transduction</keyword>
<keyword id="KW-0807">Transducer</keyword>
<keyword id="KW-0812">Transmembrane</keyword>
<keyword id="KW-1133">Transmembrane helix</keyword>
<dbReference type="EMBL" id="AE013599">
    <property type="protein sequence ID" value="AAF47004.1"/>
    <property type="status" value="ALT_SEQ"/>
    <property type="molecule type" value="Genomic_DNA"/>
</dbReference>
<dbReference type="RefSeq" id="NP_523821.1">
    <property type="nucleotide sequence ID" value="NM_079097.1"/>
</dbReference>
<dbReference type="SMR" id="P81923"/>
<dbReference type="BioGRID" id="63312">
    <property type="interactions" value="1"/>
</dbReference>
<dbReference type="FunCoup" id="P81923">
    <property type="interactions" value="36"/>
</dbReference>
<dbReference type="IntAct" id="P81923">
    <property type="interactions" value="8"/>
</dbReference>
<dbReference type="STRING" id="7227.FBpp0071932"/>
<dbReference type="GlyCosmos" id="P81923">
    <property type="glycosylation" value="1 site, No reported glycans"/>
</dbReference>
<dbReference type="GlyGen" id="P81923">
    <property type="glycosylation" value="1 site"/>
</dbReference>
<dbReference type="PaxDb" id="7227-FBpp0071932"/>
<dbReference type="EnsemblMetazoa" id="FBtr0072023">
    <property type="protein sequence ID" value="FBpp0071932"/>
    <property type="gene ID" value="FBgn0026384"/>
</dbReference>
<dbReference type="GeneID" id="37711"/>
<dbReference type="KEGG" id="dme:Dmel_CG9820"/>
<dbReference type="AGR" id="FB:FBgn0026384"/>
<dbReference type="CTD" id="37711"/>
<dbReference type="FlyBase" id="FBgn0026384">
    <property type="gene designation" value="Or59a"/>
</dbReference>
<dbReference type="VEuPathDB" id="VectorBase:FBgn0026384"/>
<dbReference type="eggNOG" id="ENOG502RTKY">
    <property type="taxonomic scope" value="Eukaryota"/>
</dbReference>
<dbReference type="GeneTree" id="ENSGT00540000073151"/>
<dbReference type="HOGENOM" id="CLU_033399_8_1_1"/>
<dbReference type="InParanoid" id="P81923"/>
<dbReference type="OrthoDB" id="7548151at2759"/>
<dbReference type="PhylomeDB" id="P81923"/>
<dbReference type="BioGRID-ORCS" id="37711">
    <property type="hits" value="0 hits in 1 CRISPR screen"/>
</dbReference>
<dbReference type="GenomeRNAi" id="37711"/>
<dbReference type="PRO" id="PR:P81923"/>
<dbReference type="Proteomes" id="UP000000803">
    <property type="component" value="Chromosome 2R"/>
</dbReference>
<dbReference type="Bgee" id="FBgn0026384">
    <property type="expression patterns" value="Expressed in sensory neuron"/>
</dbReference>
<dbReference type="GO" id="GO:0032590">
    <property type="term" value="C:dendrite membrane"/>
    <property type="evidence" value="ECO:0000250"/>
    <property type="project" value="FlyBase"/>
</dbReference>
<dbReference type="GO" id="GO:0016020">
    <property type="term" value="C:membrane"/>
    <property type="evidence" value="ECO:0000303"/>
    <property type="project" value="UniProtKB"/>
</dbReference>
<dbReference type="GO" id="GO:0005886">
    <property type="term" value="C:plasma membrane"/>
    <property type="evidence" value="ECO:0000255"/>
    <property type="project" value="FlyBase"/>
</dbReference>
<dbReference type="GO" id="GO:0170020">
    <property type="term" value="F:ionotropic olfactory receptor activity"/>
    <property type="evidence" value="ECO:0000250"/>
    <property type="project" value="FlyBase"/>
</dbReference>
<dbReference type="GO" id="GO:0005549">
    <property type="term" value="F:odorant binding"/>
    <property type="evidence" value="ECO:0000250"/>
    <property type="project" value="FlyBase"/>
</dbReference>
<dbReference type="GO" id="GO:0004984">
    <property type="term" value="F:olfactory receptor activity"/>
    <property type="evidence" value="ECO:0000318"/>
    <property type="project" value="GO_Central"/>
</dbReference>
<dbReference type="GO" id="GO:0050911">
    <property type="term" value="P:detection of chemical stimulus involved in sensory perception of smell"/>
    <property type="evidence" value="ECO:0000315"/>
    <property type="project" value="FlyBase"/>
</dbReference>
<dbReference type="GO" id="GO:0007608">
    <property type="term" value="P:sensory perception of smell"/>
    <property type="evidence" value="ECO:0000250"/>
    <property type="project" value="FlyBase"/>
</dbReference>
<dbReference type="GO" id="GO:0007165">
    <property type="term" value="P:signal transduction"/>
    <property type="evidence" value="ECO:0007669"/>
    <property type="project" value="UniProtKB-KW"/>
</dbReference>
<dbReference type="InterPro" id="IPR004117">
    <property type="entry name" value="7tm6_olfct_rcpt"/>
</dbReference>
<dbReference type="PANTHER" id="PTHR21137">
    <property type="entry name" value="ODORANT RECEPTOR"/>
    <property type="match status" value="1"/>
</dbReference>
<dbReference type="PANTHER" id="PTHR21137:SF35">
    <property type="entry name" value="ODORANT RECEPTOR 19A-RELATED"/>
    <property type="match status" value="1"/>
</dbReference>
<dbReference type="Pfam" id="PF02949">
    <property type="entry name" value="7tm_6"/>
    <property type="match status" value="1"/>
</dbReference>
<accession>P81923</accession>
<accession>Q9U6Y1</accession>
<evidence type="ECO:0000250" key="1"/>
<evidence type="ECO:0000255" key="2"/>
<evidence type="ECO:0000269" key="3">
    <source>
    </source>
</evidence>
<evidence type="ECO:0000269" key="4">
    <source>
    </source>
</evidence>
<evidence type="ECO:0000269" key="5">
    <source>
    </source>
</evidence>
<evidence type="ECO:0000269" key="6">
    <source>
    </source>
</evidence>
<evidence type="ECO:0000305" key="7"/>
<name>OR59A_DROME</name>